<name>ANSME_KLEAE</name>
<protein>
    <recommendedName>
        <fullName evidence="2">Serine-type anaerobic sulfatase-maturating enzyme</fullName>
        <shortName evidence="2">Ser-type anaerobic sulfatase-maturating enzyme</shortName>
        <ecNumber evidence="2">1.1.98.7</ecNumber>
    </recommendedName>
    <alternativeName>
        <fullName evidence="2">Anaerobic sulfatase-maturating enzyme</fullName>
        <shortName evidence="2">AnSME</shortName>
    </alternativeName>
    <alternativeName>
        <fullName evidence="2">Arylsulfatase-activating protein</fullName>
    </alternativeName>
    <alternativeName>
        <fullName evidence="2">Formylglycine-generating enzyme</fullName>
    </alternativeName>
</protein>
<gene>
    <name evidence="4" type="primary">atsB</name>
</gene>
<organism>
    <name type="scientific">Klebsiella aerogenes</name>
    <name type="common">Enterobacter aerogenes</name>
    <dbReference type="NCBI Taxonomy" id="548"/>
    <lineage>
        <taxon>Bacteria</taxon>
        <taxon>Pseudomonadati</taxon>
        <taxon>Pseudomonadota</taxon>
        <taxon>Gammaproteobacteria</taxon>
        <taxon>Enterobacterales</taxon>
        <taxon>Enterobacteriaceae</taxon>
        <taxon>Klebsiella/Raoultella group</taxon>
        <taxon>Klebsiella</taxon>
    </lineage>
</organism>
<reference key="1">
    <citation type="journal article" date="1990" name="J. Bacteriol.">
        <title>A sulfur- and tyramine-regulated Klebsiella aerogenes operon containing the arylsulfatase (atsA) gene and the atsB gene.</title>
        <authorList>
            <person name="Murooka Y."/>
            <person name="Ishibashi K."/>
            <person name="Yasumoto M."/>
            <person name="Sasaki M."/>
            <person name="Sugino H."/>
            <person name="Azakami H."/>
            <person name="Yamashita M."/>
        </authorList>
    </citation>
    <scope>NUCLEOTIDE SEQUENCE [GENOMIC DNA]</scope>
</reference>
<comment type="function">
    <text evidence="2">Involved in 'Ser-type' sulfatase maturation under anaerobic conditions. Catalyzes the post-translational modification of serine ('Ser-72' in the arylsulfatase AtsA) into 3-oxoalanine (also known as C(alpha)-formylglycine (FGly)), by a free radical chemical mechanism initiated via the reductive cleavage of S-adenosyl-L-methionine (SAM).</text>
</comment>
<comment type="catalytic activity">
    <reaction evidence="2">
        <text>L-seryl-[sulfatase] + S-adenosyl-L-methionine = 3-oxo-L-alanyl-[sulfatase] + 5'-deoxyadenosine + L-methionine + H(+)</text>
        <dbReference type="Rhea" id="RHEA:17609"/>
        <dbReference type="Rhea" id="RHEA-COMP:12901"/>
        <dbReference type="Rhea" id="RHEA-COMP:15882"/>
        <dbReference type="ChEBI" id="CHEBI:15378"/>
        <dbReference type="ChEBI" id="CHEBI:17319"/>
        <dbReference type="ChEBI" id="CHEBI:29999"/>
        <dbReference type="ChEBI" id="CHEBI:57844"/>
        <dbReference type="ChEBI" id="CHEBI:59789"/>
        <dbReference type="ChEBI" id="CHEBI:85621"/>
        <dbReference type="EC" id="1.1.98.7"/>
    </reaction>
</comment>
<comment type="cofactor">
    <cofactor evidence="2 3">
        <name>[4Fe-4S] cluster</name>
        <dbReference type="ChEBI" id="CHEBI:49883"/>
    </cofactor>
    <text evidence="1 2">Binds 3 [4Fe-4S] clusters (By similarity). The first cluster is coordinated with 3 cysteines and an exchangeable S-adenosyl-L-methionine (By similarity).</text>
</comment>
<comment type="pathway">
    <text evidence="2">Protein modification; sulfatase oxidation.</text>
</comment>
<comment type="subunit">
    <text evidence="2">Monomer (By similarity). Interacts with AtsA prior to its export to the periplasm (By similarity).</text>
</comment>
<comment type="subcellular location">
    <subcellularLocation>
        <location evidence="2">Cytoplasm</location>
    </subcellularLocation>
</comment>
<comment type="similarity">
    <text evidence="5">Belongs to the radical SAM superfamily. Anaerobic sulfatase-maturating enzyme family.</text>
</comment>
<keyword id="KW-0004">4Fe-4S</keyword>
<keyword id="KW-0963">Cytoplasm</keyword>
<keyword id="KW-0408">Iron</keyword>
<keyword id="KW-0411">Iron-sulfur</keyword>
<keyword id="KW-0479">Metal-binding</keyword>
<keyword id="KW-0560">Oxidoreductase</keyword>
<keyword id="KW-0949">S-adenosyl-L-methionine</keyword>
<proteinExistence type="inferred from homology"/>
<evidence type="ECO:0000250" key="1">
    <source>
        <dbReference type="UniProtKB" id="Q0TTH1"/>
    </source>
</evidence>
<evidence type="ECO:0000250" key="2">
    <source>
        <dbReference type="UniProtKB" id="Q9X758"/>
    </source>
</evidence>
<evidence type="ECO:0000255" key="3">
    <source>
        <dbReference type="PROSITE-ProRule" id="PRU01266"/>
    </source>
</evidence>
<evidence type="ECO:0000303" key="4">
    <source>
    </source>
</evidence>
<evidence type="ECO:0000305" key="5"/>
<feature type="chain" id="PRO_0000134460" description="Serine-type anaerobic sulfatase-maturating enzyme">
    <location>
        <begin position="1"/>
        <end position="405"/>
    </location>
</feature>
<feature type="domain" description="Radical SAM core" evidence="3">
    <location>
        <begin position="18"/>
        <end position="249"/>
    </location>
</feature>
<feature type="active site" description="Proton acceptor" evidence="1">
    <location>
        <position position="292"/>
    </location>
</feature>
<feature type="binding site" evidence="3">
    <location>
        <position position="35"/>
    </location>
    <ligand>
        <name>[4Fe-4S] cluster</name>
        <dbReference type="ChEBI" id="CHEBI:49883"/>
        <label>1</label>
        <note>4Fe-4S-S-AdoMet</note>
    </ligand>
</feature>
<feature type="binding site" evidence="3">
    <location>
        <position position="39"/>
    </location>
    <ligand>
        <name>[4Fe-4S] cluster</name>
        <dbReference type="ChEBI" id="CHEBI:49883"/>
        <label>1</label>
        <note>4Fe-4S-S-AdoMet</note>
    </ligand>
</feature>
<feature type="binding site" evidence="1">
    <location>
        <position position="41"/>
    </location>
    <ligand>
        <name>S-adenosyl-L-methionine</name>
        <dbReference type="ChEBI" id="CHEBI:59789"/>
    </ligand>
</feature>
<feature type="binding site" evidence="3">
    <location>
        <position position="42"/>
    </location>
    <ligand>
        <name>[4Fe-4S] cluster</name>
        <dbReference type="ChEBI" id="CHEBI:49883"/>
        <label>1</label>
        <note>4Fe-4S-S-AdoMet</note>
    </ligand>
</feature>
<feature type="binding site" evidence="1">
    <location>
        <position position="84"/>
    </location>
    <ligand>
        <name>S-adenosyl-L-methionine</name>
        <dbReference type="ChEBI" id="CHEBI:59789"/>
    </ligand>
</feature>
<feature type="binding site" evidence="1">
    <location>
        <position position="140"/>
    </location>
    <ligand>
        <name>S-adenosyl-L-methionine</name>
        <dbReference type="ChEBI" id="CHEBI:59789"/>
    </ligand>
</feature>
<feature type="binding site" evidence="1">
    <location>
        <position position="152"/>
    </location>
    <ligand>
        <name>S-adenosyl-L-methionine</name>
        <dbReference type="ChEBI" id="CHEBI:59789"/>
    </ligand>
</feature>
<feature type="binding site" evidence="1">
    <location>
        <position position="270"/>
    </location>
    <ligand>
        <name>[4Fe-4S] cluster</name>
        <dbReference type="ChEBI" id="CHEBI:49883"/>
        <label>2</label>
    </ligand>
</feature>
<feature type="binding site" evidence="1">
    <location>
        <position position="276"/>
    </location>
    <ligand>
        <name>[4Fe-4S] cluster</name>
        <dbReference type="ChEBI" id="CHEBI:49883"/>
        <label>2</label>
    </ligand>
</feature>
<feature type="binding site" evidence="1">
    <location>
        <position position="291"/>
    </location>
    <ligand>
        <name>[4Fe-4S] cluster</name>
        <dbReference type="ChEBI" id="CHEBI:49883"/>
        <label>2</label>
    </ligand>
</feature>
<feature type="binding site" evidence="1">
    <location>
        <position position="331"/>
    </location>
    <ligand>
        <name>[4Fe-4S] cluster</name>
        <dbReference type="ChEBI" id="CHEBI:49883"/>
        <label>3</label>
    </ligand>
</feature>
<feature type="binding site" evidence="1">
    <location>
        <position position="334"/>
    </location>
    <ligand>
        <name>[4Fe-4S] cluster</name>
        <dbReference type="ChEBI" id="CHEBI:49883"/>
        <label>3</label>
    </ligand>
</feature>
<feature type="binding site" evidence="1">
    <location>
        <position position="340"/>
    </location>
    <ligand>
        <name>[4Fe-4S] cluster</name>
        <dbReference type="ChEBI" id="CHEBI:49883"/>
        <label>3</label>
    </ligand>
</feature>
<feature type="binding site" evidence="1">
    <location>
        <position position="344"/>
    </location>
    <ligand>
        <name>[4Fe-4S] cluster</name>
        <dbReference type="ChEBI" id="CHEBI:49883"/>
        <label>2</label>
    </ligand>
</feature>
<feature type="binding site" evidence="1">
    <location>
        <position position="357"/>
    </location>
    <ligand>
        <name>[4Fe-4S] cluster</name>
        <dbReference type="ChEBI" id="CHEBI:49883"/>
        <label>3</label>
    </ligand>
</feature>
<accession>P20714</accession>
<sequence length="405" mass="45372">MLNIAALRQQQIPLAAEPRSPVPFHILMKPIGPACNLACRYCYYPQDETPVNKMDDARLEQFIRRYIAAQPAGAREINFVWQGGEPLLAGLSFYKKALALQARYAPDGVTISNSLQTNGTLINDAWCRLFREHGFIIGLSLEGNEALQDYHRPDKRGRSTWSAALRGIDLLHQHQVDFNLLVVVHNEMAAHAAAIYDRLVSLGARYLQFQPLMSEGAALREGYQLSADNWGRFMVGIWRQWRKRCDRGRVFVINIEQAWAQYFTHTSGSCVHSARCGSNLVMEPDGQLYACDHLINAEHRLGRLDEQTLAAAVDASVQLPFGQQKSLRRECQTCSVKMVCQGGCPAHLNAAGNNRLCGGYYRFFSDILAPLRPFSRDLNGLKAWRAAFVGTAAYCVAPYPDDIPL</sequence>
<dbReference type="EC" id="1.1.98.7" evidence="2"/>
<dbReference type="EMBL" id="M31938">
    <property type="protein sequence ID" value="AAA25050.1"/>
    <property type="molecule type" value="Genomic_DNA"/>
</dbReference>
<dbReference type="SMR" id="P20714"/>
<dbReference type="STRING" id="548.EAG7_02823"/>
<dbReference type="UniPathway" id="UPA00910"/>
<dbReference type="GO" id="GO:0005737">
    <property type="term" value="C:cytoplasm"/>
    <property type="evidence" value="ECO:0007669"/>
    <property type="project" value="UniProtKB-SubCell"/>
</dbReference>
<dbReference type="GO" id="GO:0051539">
    <property type="term" value="F:4 iron, 4 sulfur cluster binding"/>
    <property type="evidence" value="ECO:0007669"/>
    <property type="project" value="UniProtKB-KW"/>
</dbReference>
<dbReference type="GO" id="GO:0046872">
    <property type="term" value="F:metal ion binding"/>
    <property type="evidence" value="ECO:0007669"/>
    <property type="project" value="UniProtKB-KW"/>
</dbReference>
<dbReference type="GO" id="GO:0016491">
    <property type="term" value="F:oxidoreductase activity"/>
    <property type="evidence" value="ECO:0007669"/>
    <property type="project" value="UniProtKB-KW"/>
</dbReference>
<dbReference type="CDD" id="cd01335">
    <property type="entry name" value="Radical_SAM"/>
    <property type="match status" value="1"/>
</dbReference>
<dbReference type="CDD" id="cd21120">
    <property type="entry name" value="SPASM_anSME"/>
    <property type="match status" value="1"/>
</dbReference>
<dbReference type="Gene3D" id="3.20.20.70">
    <property type="entry name" value="Aldolase class I"/>
    <property type="match status" value="1"/>
</dbReference>
<dbReference type="InterPro" id="IPR023885">
    <property type="entry name" value="4Fe4S-binding_SPASM_dom"/>
</dbReference>
<dbReference type="InterPro" id="IPR013785">
    <property type="entry name" value="Aldolase_TIM"/>
</dbReference>
<dbReference type="InterPro" id="IPR034491">
    <property type="entry name" value="Anaerob_Ser_sulfatase-maturase"/>
</dbReference>
<dbReference type="InterPro" id="IPR007197">
    <property type="entry name" value="rSAM"/>
</dbReference>
<dbReference type="InterPro" id="IPR047207">
    <property type="entry name" value="SPASM_anSME"/>
</dbReference>
<dbReference type="InterPro" id="IPR023867">
    <property type="entry name" value="Sulphatase_maturase_rSAM"/>
</dbReference>
<dbReference type="NCBIfam" id="TIGR04085">
    <property type="entry name" value="rSAM_more_4Fe4S"/>
    <property type="match status" value="1"/>
</dbReference>
<dbReference type="NCBIfam" id="TIGR03942">
    <property type="entry name" value="sulfatase_rSAM"/>
    <property type="match status" value="1"/>
</dbReference>
<dbReference type="PANTHER" id="PTHR43273">
    <property type="entry name" value="ANAEROBIC SULFATASE-MATURATING ENZYME HOMOLOG ASLB-RELATED"/>
    <property type="match status" value="1"/>
</dbReference>
<dbReference type="PANTHER" id="PTHR43273:SF3">
    <property type="entry name" value="ANAEROBIC SULFATASE-MATURATING ENZYME HOMOLOG ASLB-RELATED"/>
    <property type="match status" value="1"/>
</dbReference>
<dbReference type="Pfam" id="PF04055">
    <property type="entry name" value="Radical_SAM"/>
    <property type="match status" value="1"/>
</dbReference>
<dbReference type="SFLD" id="SFLDF00285">
    <property type="entry name" value="anaerobic_Ser-type_sulfatase-m"/>
    <property type="match status" value="1"/>
</dbReference>
<dbReference type="SFLD" id="SFLDG01072">
    <property type="entry name" value="dehydrogenase_like"/>
    <property type="match status" value="1"/>
</dbReference>
<dbReference type="SFLD" id="SFLDG01384">
    <property type="entry name" value="thioether_bond_formation_requi"/>
    <property type="match status" value="1"/>
</dbReference>
<dbReference type="SUPFAM" id="SSF102114">
    <property type="entry name" value="Radical SAM enzymes"/>
    <property type="match status" value="1"/>
</dbReference>
<dbReference type="PROSITE" id="PS51918">
    <property type="entry name" value="RADICAL_SAM"/>
    <property type="match status" value="1"/>
</dbReference>